<dbReference type="EMBL" id="X02560">
    <property type="protein sequence ID" value="CAA26401.1"/>
    <property type="molecule type" value="Genomic_DNA"/>
</dbReference>
<dbReference type="EMBL" id="AB027572">
    <property type="protein sequence ID" value="BAA78036.1"/>
    <property type="molecule type" value="Genomic_DNA"/>
</dbReference>
<dbReference type="EMBL" id="AB042240">
    <property type="protein sequence ID" value="BAB47021.1"/>
    <property type="molecule type" value="Genomic_DNA"/>
</dbReference>
<dbReference type="PIR" id="S07166">
    <property type="entry name" value="S07166"/>
</dbReference>
<dbReference type="RefSeq" id="NP_114246.1">
    <property type="nucleotide sequence ID" value="NC_002762.1"/>
</dbReference>
<dbReference type="SMR" id="P69695"/>
<dbReference type="STRING" id="4565.P69695"/>
<dbReference type="PaxDb" id="4565-EPlTAEP00000010024"/>
<dbReference type="EnsemblPlants" id="TraesARI1B03G00343140.1">
    <property type="protein sequence ID" value="TraesARI1B03G00343140.1.CDS1"/>
    <property type="gene ID" value="TraesARI1B03G00343140"/>
</dbReference>
<dbReference type="EnsemblPlants" id="TraesCAD_scaffold_114418_01G000100.1">
    <property type="protein sequence ID" value="TraesCAD_scaffold_114418_01G000100.1"/>
    <property type="gene ID" value="TraesCAD_scaffold_114418_01G000100"/>
</dbReference>
<dbReference type="EnsemblPlants" id="TraesCS1B02G317700.1">
    <property type="protein sequence ID" value="TraesCS1B02G317700.1.cds1"/>
    <property type="gene ID" value="TraesCS1B02G317700"/>
</dbReference>
<dbReference type="EnsemblPlants" id="TraesCS1B03G0871500.1">
    <property type="protein sequence ID" value="TraesCS1B03G0871500.1.CDS1"/>
    <property type="gene ID" value="TraesCS1B03G0871500"/>
</dbReference>
<dbReference type="EnsemblPlants" id="TraesJAG1B03G00339760.1">
    <property type="protein sequence ID" value="TraesJAG1B03G00339760.1.CDS1"/>
    <property type="gene ID" value="TraesJAG1B03G00339760"/>
</dbReference>
<dbReference type="EnsemblPlants" id="TraesKAR1B01G0356460.1">
    <property type="protein sequence ID" value="cds.TraesKAR1B01G0356460.1"/>
    <property type="gene ID" value="TraesKAR1B01G0356460"/>
</dbReference>
<dbReference type="EnsemblPlants" id="TraesKARUn01G0069790.1">
    <property type="protein sequence ID" value="cds.TraesKARUn01G0069790.1"/>
    <property type="gene ID" value="TraesKARUn01G0069790"/>
</dbReference>
<dbReference type="EnsemblPlants" id="TraesKARUn01G0071030.1">
    <property type="protein sequence ID" value="cds.TraesKARUn01G0071030.1"/>
    <property type="gene ID" value="TraesKARUn01G0071030"/>
</dbReference>
<dbReference type="EnsemblPlants" id="TraesKARUn01G0071280.1">
    <property type="protein sequence ID" value="cds.TraesKARUn01G0071280.1"/>
    <property type="gene ID" value="TraesKARUn01G0071280"/>
</dbReference>
<dbReference type="EnsemblPlants" id="TraesKARUn01G0071820.1">
    <property type="protein sequence ID" value="cds.TraesKARUn01G0071820.1"/>
    <property type="gene ID" value="TraesKARUn01G0071820"/>
</dbReference>
<dbReference type="EnsemblPlants" id="TraesKARUn01G0072040.1">
    <property type="protein sequence ID" value="cds.TraesKARUn01G0072040.1"/>
    <property type="gene ID" value="TraesKARUn01G0072040"/>
</dbReference>
<dbReference type="EnsemblPlants" id="TraesKARUn01G0072260.1">
    <property type="protein sequence ID" value="cds.TraesKARUn01G0072260.1"/>
    <property type="gene ID" value="TraesKARUn01G0072260"/>
</dbReference>
<dbReference type="EnsemblPlants" id="TraesKARUn01G0074200.1">
    <property type="protein sequence ID" value="cds.TraesKARUn01G0074200.1"/>
    <property type="gene ID" value="TraesKARUn01G0074200"/>
</dbReference>
<dbReference type="EnsemblPlants" id="TraesKARUn01G0083790.1">
    <property type="protein sequence ID" value="cds.TraesKARUn01G0083790.1"/>
    <property type="gene ID" value="TraesKARUn01G0083790"/>
</dbReference>
<dbReference type="EnsemblPlants" id="TraesKARUn01G0083920.1">
    <property type="protein sequence ID" value="cds.TraesKARUn01G0083920.1"/>
    <property type="gene ID" value="TraesKARUn01G0083920"/>
</dbReference>
<dbReference type="EnsemblPlants" id="TraesKARUn01G0084210.1">
    <property type="protein sequence ID" value="cds.TraesKARUn01G0084210.1"/>
    <property type="gene ID" value="TraesKARUn01G0084210"/>
</dbReference>
<dbReference type="EnsemblPlants" id="TraesKARUn01G0084310.1">
    <property type="protein sequence ID" value="cds.TraesKARUn01G0084310.1"/>
    <property type="gene ID" value="TraesKARUn01G0084310"/>
</dbReference>
<dbReference type="EnsemblPlants" id="TraesKARUn01G0084470.1">
    <property type="protein sequence ID" value="cds.TraesKARUn01G0084470.1"/>
    <property type="gene ID" value="TraesKARUn01G0084470"/>
</dbReference>
<dbReference type="EnsemblPlants" id="TraesKARUn01G0098320.1">
    <property type="protein sequence ID" value="cds.TraesKARUn01G0098320.1"/>
    <property type="gene ID" value="TraesKARUn01G0098320"/>
</dbReference>
<dbReference type="EnsemblPlants" id="TraesKARUn01G0137000.1">
    <property type="protein sequence ID" value="cds.TraesKARUn01G0137000.1"/>
    <property type="gene ID" value="TraesKARUn01G0137000"/>
</dbReference>
<dbReference type="EnsemblPlants" id="TraesKARUn01G0137710.1">
    <property type="protein sequence ID" value="cds.TraesKARUn01G0137710.1"/>
    <property type="gene ID" value="TraesKARUn01G0137710"/>
</dbReference>
<dbReference type="EnsemblPlants" id="TraesKARUn01G0137740.1">
    <property type="protein sequence ID" value="cds.TraesKARUn01G0137740.1"/>
    <property type="gene ID" value="TraesKARUn01G0137740"/>
</dbReference>
<dbReference type="EnsemblPlants" id="TraesKARUn01G0143900.1">
    <property type="protein sequence ID" value="cds.TraesKARUn01G0143900.1"/>
    <property type="gene ID" value="TraesKARUn01G0143900"/>
</dbReference>
<dbReference type="EnsemblPlants" id="TraesKARUn01G0185460.1">
    <property type="protein sequence ID" value="cds.TraesKARUn01G0185460.1"/>
    <property type="gene ID" value="TraesKARUn01G0185460"/>
</dbReference>
<dbReference type="EnsemblPlants" id="TraesKARUn01G0185790.1">
    <property type="protein sequence ID" value="cds.TraesKARUn01G0185790.1"/>
    <property type="gene ID" value="TraesKARUn01G0185790"/>
</dbReference>
<dbReference type="EnsemblPlants" id="TraesKARUn01G0185850.1">
    <property type="protein sequence ID" value="cds.TraesKARUn01G0185850.1"/>
    <property type="gene ID" value="TraesKARUn01G0185850"/>
</dbReference>
<dbReference type="EnsemblPlants" id="TraesKARUn01G0185920.1">
    <property type="protein sequence ID" value="cds.TraesKARUn01G0185920.1"/>
    <property type="gene ID" value="TraesKARUn01G0185920"/>
</dbReference>
<dbReference type="EnsemblPlants" id="TraesKARUn01G0191420.1">
    <property type="protein sequence ID" value="cds.TraesKARUn01G0191420.1"/>
    <property type="gene ID" value="TraesKARUn01G0191420"/>
</dbReference>
<dbReference type="EnsemblPlants" id="TraesKARUn01G0192410.1">
    <property type="protein sequence ID" value="cds.TraesKARUn01G0192410.1"/>
    <property type="gene ID" value="TraesKARUn01G0192410"/>
</dbReference>
<dbReference type="EnsemblPlants" id="TraesLAC1B03G00342850.1">
    <property type="protein sequence ID" value="TraesLAC1B03G00342850.1.CDS1"/>
    <property type="gene ID" value="TraesLAC1B03G00342850"/>
</dbReference>
<dbReference type="EnsemblPlants" id="TraesMAC1B03G00340400.1">
    <property type="protein sequence ID" value="TraesMAC1B03G00340400.1.CDS1"/>
    <property type="gene ID" value="TraesMAC1B03G00340400"/>
</dbReference>
<dbReference type="EnsemblPlants" id="TraesNOR1B03G00344170.1">
    <property type="protein sequence ID" value="TraesNOR1B03G00344170.1.CDS1"/>
    <property type="gene ID" value="TraesNOR1B03G00344170"/>
</dbReference>
<dbReference type="EnsemblPlants" id="TraesPARA_EIv1.0_2055700.1">
    <property type="protein sequence ID" value="TraesPARA_EIv1.0_2055700.1.CDS1"/>
    <property type="gene ID" value="TraesPARA_EIv1.0_2055700"/>
</dbReference>
<dbReference type="EnsemblPlants" id="TraesRN1B0100885400.1">
    <property type="protein sequence ID" value="TraesRN1B0100885400.1"/>
    <property type="gene ID" value="TraesRN1B0100885400"/>
</dbReference>
<dbReference type="EnsemblPlants" id="TraesRN4B0100430400.1">
    <property type="protein sequence ID" value="TraesRN4B0100430400.1"/>
    <property type="gene ID" value="TraesRN4B0100430400"/>
</dbReference>
<dbReference type="EnsemblPlants" id="TraesRN5D0100023300.1">
    <property type="protein sequence ID" value="TraesRN5D0100023300.1"/>
    <property type="gene ID" value="TraesRN5D0100023300"/>
</dbReference>
<dbReference type="EnsemblPlants" id="TraesSTA3A03G01512530.1">
    <property type="protein sequence ID" value="TraesSTA3A03G01512530.1.CDS1"/>
    <property type="gene ID" value="TraesSTA3A03G01512530"/>
</dbReference>
<dbReference type="EnsemblPlants" id="TraesWEE_scaffold_110248_01G000400.1">
    <property type="protein sequence ID" value="TraesWEE_scaffold_110248_01G000400.1"/>
    <property type="gene ID" value="TraesWEE_scaffold_110248_01G000400"/>
</dbReference>
<dbReference type="GeneID" id="803093"/>
<dbReference type="Gramene" id="TraesARI1B03G00343140.1">
    <property type="protein sequence ID" value="TraesARI1B03G00343140.1.CDS1"/>
    <property type="gene ID" value="TraesARI1B03G00343140"/>
</dbReference>
<dbReference type="Gramene" id="TraesCAD_scaffold_114418_01G000100.1">
    <property type="protein sequence ID" value="TraesCAD_scaffold_114418_01G000100.1"/>
    <property type="gene ID" value="TraesCAD_scaffold_114418_01G000100"/>
</dbReference>
<dbReference type="Gramene" id="TraesCS1B02G317700.1">
    <property type="protein sequence ID" value="TraesCS1B02G317700.1.cds1"/>
    <property type="gene ID" value="TraesCS1B02G317700"/>
</dbReference>
<dbReference type="Gramene" id="TraesCS1B03G0871500.1">
    <property type="protein sequence ID" value="TraesCS1B03G0871500.1.CDS1"/>
    <property type="gene ID" value="TraesCS1B03G0871500"/>
</dbReference>
<dbReference type="Gramene" id="TraesJAG1B03G00339760.1">
    <property type="protein sequence ID" value="TraesJAG1B03G00339760.1.CDS1"/>
    <property type="gene ID" value="TraesJAG1B03G00339760"/>
</dbReference>
<dbReference type="Gramene" id="TraesKAR1B01G0356460.1">
    <property type="protein sequence ID" value="cds.TraesKAR1B01G0356460.1"/>
    <property type="gene ID" value="TraesKAR1B01G0356460"/>
</dbReference>
<dbReference type="Gramene" id="TraesKARUn01G0069790.1">
    <property type="protein sequence ID" value="cds.TraesKARUn01G0069790.1"/>
    <property type="gene ID" value="TraesKARUn01G0069790"/>
</dbReference>
<dbReference type="Gramene" id="TraesKARUn01G0071030.1">
    <property type="protein sequence ID" value="cds.TraesKARUn01G0071030.1"/>
    <property type="gene ID" value="TraesKARUn01G0071030"/>
</dbReference>
<dbReference type="Gramene" id="TraesKARUn01G0071280.1">
    <property type="protein sequence ID" value="cds.TraesKARUn01G0071280.1"/>
    <property type="gene ID" value="TraesKARUn01G0071280"/>
</dbReference>
<dbReference type="Gramene" id="TraesKARUn01G0071820.1">
    <property type="protein sequence ID" value="cds.TraesKARUn01G0071820.1"/>
    <property type="gene ID" value="TraesKARUn01G0071820"/>
</dbReference>
<dbReference type="Gramene" id="TraesKARUn01G0072040.1">
    <property type="protein sequence ID" value="cds.TraesKARUn01G0072040.1"/>
    <property type="gene ID" value="TraesKARUn01G0072040"/>
</dbReference>
<dbReference type="Gramene" id="TraesKARUn01G0072260.1">
    <property type="protein sequence ID" value="cds.TraesKARUn01G0072260.1"/>
    <property type="gene ID" value="TraesKARUn01G0072260"/>
</dbReference>
<dbReference type="Gramene" id="TraesKARUn01G0074200.1">
    <property type="protein sequence ID" value="cds.TraesKARUn01G0074200.1"/>
    <property type="gene ID" value="TraesKARUn01G0074200"/>
</dbReference>
<dbReference type="Gramene" id="TraesKARUn01G0083790.1">
    <property type="protein sequence ID" value="cds.TraesKARUn01G0083790.1"/>
    <property type="gene ID" value="TraesKARUn01G0083790"/>
</dbReference>
<dbReference type="Gramene" id="TraesKARUn01G0083920.1">
    <property type="protein sequence ID" value="cds.TraesKARUn01G0083920.1"/>
    <property type="gene ID" value="TraesKARUn01G0083920"/>
</dbReference>
<dbReference type="Gramene" id="TraesKARUn01G0084210.1">
    <property type="protein sequence ID" value="cds.TraesKARUn01G0084210.1"/>
    <property type="gene ID" value="TraesKARUn01G0084210"/>
</dbReference>
<dbReference type="Gramene" id="TraesKARUn01G0084310.1">
    <property type="protein sequence ID" value="cds.TraesKARUn01G0084310.1"/>
    <property type="gene ID" value="TraesKARUn01G0084310"/>
</dbReference>
<dbReference type="Gramene" id="TraesKARUn01G0084470.1">
    <property type="protein sequence ID" value="cds.TraesKARUn01G0084470.1"/>
    <property type="gene ID" value="TraesKARUn01G0084470"/>
</dbReference>
<dbReference type="Gramene" id="TraesKARUn01G0098320.1">
    <property type="protein sequence ID" value="cds.TraesKARUn01G0098320.1"/>
    <property type="gene ID" value="TraesKARUn01G0098320"/>
</dbReference>
<dbReference type="Gramene" id="TraesKARUn01G0137000.1">
    <property type="protein sequence ID" value="cds.TraesKARUn01G0137000.1"/>
    <property type="gene ID" value="TraesKARUn01G0137000"/>
</dbReference>
<dbReference type="Gramene" id="TraesKARUn01G0137710.1">
    <property type="protein sequence ID" value="cds.TraesKARUn01G0137710.1"/>
    <property type="gene ID" value="TraesKARUn01G0137710"/>
</dbReference>
<dbReference type="Gramene" id="TraesKARUn01G0137740.1">
    <property type="protein sequence ID" value="cds.TraesKARUn01G0137740.1"/>
    <property type="gene ID" value="TraesKARUn01G0137740"/>
</dbReference>
<dbReference type="Gramene" id="TraesKARUn01G0143900.1">
    <property type="protein sequence ID" value="cds.TraesKARUn01G0143900.1"/>
    <property type="gene ID" value="TraesKARUn01G0143900"/>
</dbReference>
<dbReference type="Gramene" id="TraesKARUn01G0185460.1">
    <property type="protein sequence ID" value="cds.TraesKARUn01G0185460.1"/>
    <property type="gene ID" value="TraesKARUn01G0185460"/>
</dbReference>
<dbReference type="Gramene" id="TraesKARUn01G0185790.1">
    <property type="protein sequence ID" value="cds.TraesKARUn01G0185790.1"/>
    <property type="gene ID" value="TraesKARUn01G0185790"/>
</dbReference>
<dbReference type="Gramene" id="TraesKARUn01G0185850.1">
    <property type="protein sequence ID" value="cds.TraesKARUn01G0185850.1"/>
    <property type="gene ID" value="TraesKARUn01G0185850"/>
</dbReference>
<dbReference type="Gramene" id="TraesKARUn01G0185920.1">
    <property type="protein sequence ID" value="cds.TraesKARUn01G0185920.1"/>
    <property type="gene ID" value="TraesKARUn01G0185920"/>
</dbReference>
<dbReference type="Gramene" id="TraesKARUn01G0191420.1">
    <property type="protein sequence ID" value="cds.TraesKARUn01G0191420.1"/>
    <property type="gene ID" value="TraesKARUn01G0191420"/>
</dbReference>
<dbReference type="Gramene" id="TraesKARUn01G0192410.1">
    <property type="protein sequence ID" value="cds.TraesKARUn01G0192410.1"/>
    <property type="gene ID" value="TraesKARUn01G0192410"/>
</dbReference>
<dbReference type="Gramene" id="TraesLAC1B03G00342850.1">
    <property type="protein sequence ID" value="TraesLAC1B03G00342850.1.CDS1"/>
    <property type="gene ID" value="TraesLAC1B03G00342850"/>
</dbReference>
<dbReference type="Gramene" id="TraesMAC1B03G00340400.1">
    <property type="protein sequence ID" value="TraesMAC1B03G00340400.1.CDS1"/>
    <property type="gene ID" value="TraesMAC1B03G00340400"/>
</dbReference>
<dbReference type="Gramene" id="TraesNOR1B03G00344170.1">
    <property type="protein sequence ID" value="TraesNOR1B03G00344170.1.CDS1"/>
    <property type="gene ID" value="TraesNOR1B03G00344170"/>
</dbReference>
<dbReference type="Gramene" id="TraesPARA_EIv1.0_2055700.1">
    <property type="protein sequence ID" value="TraesPARA_EIv1.0_2055700.1.CDS1"/>
    <property type="gene ID" value="TraesPARA_EIv1.0_2055700"/>
</dbReference>
<dbReference type="Gramene" id="TraesRN1B0100885400.1">
    <property type="protein sequence ID" value="TraesRN1B0100885400.1"/>
    <property type="gene ID" value="TraesRN1B0100885400"/>
</dbReference>
<dbReference type="Gramene" id="TraesRN4B0100430400.1">
    <property type="protein sequence ID" value="TraesRN4B0100430400.1"/>
    <property type="gene ID" value="TraesRN4B0100430400"/>
</dbReference>
<dbReference type="Gramene" id="TraesRN5D0100023300.1">
    <property type="protein sequence ID" value="TraesRN5D0100023300.1"/>
    <property type="gene ID" value="TraesRN5D0100023300"/>
</dbReference>
<dbReference type="Gramene" id="TraesSTA3A03G01512530.1">
    <property type="protein sequence ID" value="TraesSTA3A03G01512530.1.CDS1"/>
    <property type="gene ID" value="TraesSTA3A03G01512530"/>
</dbReference>
<dbReference type="Gramene" id="TraesWEE_scaffold_110248_01G000400.1">
    <property type="protein sequence ID" value="TraesWEE_scaffold_110248_01G000400.1"/>
    <property type="gene ID" value="TraesWEE_scaffold_110248_01G000400"/>
</dbReference>
<dbReference type="KEGG" id="taes:803093"/>
<dbReference type="eggNOG" id="ENOG502S7KE">
    <property type="taxonomic scope" value="Eukaryota"/>
</dbReference>
<dbReference type="HOGENOM" id="CLU_195286_0_0_1"/>
<dbReference type="OrthoDB" id="769790at2759"/>
<dbReference type="Proteomes" id="UP000019116">
    <property type="component" value="Chloroplast"/>
</dbReference>
<dbReference type="GO" id="GO:0009535">
    <property type="term" value="C:chloroplast thylakoid membrane"/>
    <property type="evidence" value="ECO:0007669"/>
    <property type="project" value="UniProtKB-SubCell"/>
</dbReference>
<dbReference type="GO" id="GO:0009539">
    <property type="term" value="C:photosystem II reaction center"/>
    <property type="evidence" value="ECO:0007669"/>
    <property type="project" value="InterPro"/>
</dbReference>
<dbReference type="GO" id="GO:0015979">
    <property type="term" value="P:photosynthesis"/>
    <property type="evidence" value="ECO:0007669"/>
    <property type="project" value="UniProtKB-UniRule"/>
</dbReference>
<dbReference type="GO" id="GO:0042549">
    <property type="term" value="P:photosystem II stabilization"/>
    <property type="evidence" value="ECO:0007669"/>
    <property type="project" value="InterPro"/>
</dbReference>
<dbReference type="FunFam" id="1.10.287.740:FF:000001">
    <property type="entry name" value="Photosystem II reaction center protein Z"/>
    <property type="match status" value="1"/>
</dbReference>
<dbReference type="Gene3D" id="1.10.287.740">
    <property type="entry name" value="Photosystem II PsbZ, reaction centre"/>
    <property type="match status" value="1"/>
</dbReference>
<dbReference type="HAMAP" id="MF_00644">
    <property type="entry name" value="PSII_PsbZ"/>
    <property type="match status" value="1"/>
</dbReference>
<dbReference type="InterPro" id="IPR002644">
    <property type="entry name" value="PSII_PsbZ"/>
</dbReference>
<dbReference type="InterPro" id="IPR036512">
    <property type="entry name" value="PSII_PsbZ_sf"/>
</dbReference>
<dbReference type="NCBIfam" id="TIGR03043">
    <property type="entry name" value="PS_II_psbZ"/>
    <property type="match status" value="1"/>
</dbReference>
<dbReference type="PANTHER" id="PTHR34971">
    <property type="entry name" value="PHOTOSYSTEM II REACTION CENTER PROTEIN Z"/>
    <property type="match status" value="1"/>
</dbReference>
<dbReference type="PANTHER" id="PTHR34971:SF2">
    <property type="entry name" value="PHOTOSYSTEM II REACTION CENTER PROTEIN Z"/>
    <property type="match status" value="1"/>
</dbReference>
<dbReference type="Pfam" id="PF01737">
    <property type="entry name" value="Ycf9"/>
    <property type="match status" value="1"/>
</dbReference>
<dbReference type="SUPFAM" id="SSF161055">
    <property type="entry name" value="PsbZ-like"/>
    <property type="match status" value="1"/>
</dbReference>
<reference key="1">
    <citation type="journal article" date="1985" name="Curr. Genet.">
        <title>Organization and sequence of five tRNA genes and of an unidentified reading frame in the wheat chloroplast genome: evidence for gene rearrangements during the evolution of chloroplast genomes.</title>
        <authorList>
            <person name="Quigley F."/>
            <person name="Weil J.-H."/>
        </authorList>
    </citation>
    <scope>NUCLEOTIDE SEQUENCE [GENOMIC DNA]</scope>
</reference>
<reference key="2">
    <citation type="submission" date="1999-05" db="EMBL/GenBank/DDBJ databases">
        <title>Molecular analysis of a 21.1-kb fragment of wheat chloroplast DNA bearing RNA polymerase subunit (rpo) genes.</title>
        <authorList>
            <person name="Matsuoka Y."/>
            <person name="Tsunewaki K."/>
            <person name="Ohnishi Y."/>
        </authorList>
    </citation>
    <scope>NUCLEOTIDE SEQUENCE [LARGE SCALE GENOMIC DNA]</scope>
    <source>
        <strain>cv. Chinese Spring</strain>
    </source>
</reference>
<reference key="3">
    <citation type="journal article" date="2000" name="Plant Mol. Biol. Rep.">
        <title>Chinese spring wheat (Triticum aestivum L.) chloroplast genome: complete sequence and contig clones.</title>
        <authorList>
            <person name="Ogihara Y."/>
            <person name="Isono K."/>
            <person name="Kojima T."/>
            <person name="Endo A."/>
            <person name="Hanaoka M."/>
            <person name="Shiina T."/>
            <person name="Terachi T."/>
            <person name="Utsugi S."/>
            <person name="Murata M."/>
            <person name="Mori N."/>
            <person name="Takumi S."/>
            <person name="Ikeo K."/>
            <person name="Gojobori T."/>
            <person name="Murai R."/>
            <person name="Murai K."/>
            <person name="Matsuoka Y."/>
            <person name="Ohnishi Y."/>
            <person name="Tajiri H."/>
            <person name="Tsunewaki K."/>
        </authorList>
    </citation>
    <scope>NUCLEOTIDE SEQUENCE [LARGE SCALE GENOMIC DNA]</scope>
    <source>
        <strain>cv. Chinese Spring</strain>
    </source>
</reference>
<feature type="chain" id="PRO_0000217731" description="Photosystem II reaction center protein Z">
    <location>
        <begin position="1"/>
        <end position="62"/>
    </location>
</feature>
<feature type="transmembrane region" description="Helical" evidence="1">
    <location>
        <begin position="8"/>
        <end position="28"/>
    </location>
</feature>
<feature type="transmembrane region" description="Helical" evidence="1">
    <location>
        <begin position="41"/>
        <end position="61"/>
    </location>
</feature>
<comment type="function">
    <text evidence="1">May control the interaction of photosystem II (PSII) cores with the light-harvesting antenna, regulates electron flow through the 2 photosystem reaction centers. PSII is a light-driven water plastoquinone oxidoreductase, using light energy to abstract electrons from H(2)O, generating a proton gradient subsequently used for ATP formation.</text>
</comment>
<comment type="subunit">
    <text evidence="1">PSII is composed of 1 copy each of membrane proteins PsbA, PsbB, PsbC, PsbD, PsbE, PsbF, PsbH, PsbI, PsbJ, PsbK, PsbL, PsbM, PsbT, PsbY, PsbZ, Psb30/Ycf12, at least 3 peripheral proteins of the oxygen-evolving complex and a large number of cofactors. It forms dimeric complexes.</text>
</comment>
<comment type="subcellular location">
    <subcellularLocation>
        <location evidence="1">Plastid</location>
        <location evidence="1">Chloroplast thylakoid membrane</location>
        <topology evidence="1">Multi-pass membrane protein</topology>
    </subcellularLocation>
</comment>
<comment type="similarity">
    <text evidence="1">Belongs to the PsbZ family.</text>
</comment>
<name>PSBZ_WHEAT</name>
<geneLocation type="chloroplast"/>
<proteinExistence type="inferred from homology"/>
<protein>
    <recommendedName>
        <fullName evidence="1">Photosystem II reaction center protein Z</fullName>
        <shortName evidence="1">PSII-Z</shortName>
    </recommendedName>
</protein>
<gene>
    <name evidence="1" type="primary">psbZ</name>
    <name type="synonym">ycf9</name>
</gene>
<keyword id="KW-0150">Chloroplast</keyword>
<keyword id="KW-0472">Membrane</keyword>
<keyword id="KW-0602">Photosynthesis</keyword>
<keyword id="KW-0604">Photosystem II</keyword>
<keyword id="KW-0934">Plastid</keyword>
<keyword id="KW-0674">Reaction center</keyword>
<keyword id="KW-1185">Reference proteome</keyword>
<keyword id="KW-0793">Thylakoid</keyword>
<keyword id="KW-0812">Transmembrane</keyword>
<keyword id="KW-1133">Transmembrane helix</keyword>
<organism>
    <name type="scientific">Triticum aestivum</name>
    <name type="common">Wheat</name>
    <dbReference type="NCBI Taxonomy" id="4565"/>
    <lineage>
        <taxon>Eukaryota</taxon>
        <taxon>Viridiplantae</taxon>
        <taxon>Streptophyta</taxon>
        <taxon>Embryophyta</taxon>
        <taxon>Tracheophyta</taxon>
        <taxon>Spermatophyta</taxon>
        <taxon>Magnoliopsida</taxon>
        <taxon>Liliopsida</taxon>
        <taxon>Poales</taxon>
        <taxon>Poaceae</taxon>
        <taxon>BOP clade</taxon>
        <taxon>Pooideae</taxon>
        <taxon>Triticodae</taxon>
        <taxon>Triticeae</taxon>
        <taxon>Triticinae</taxon>
        <taxon>Triticum</taxon>
    </lineage>
</organism>
<evidence type="ECO:0000255" key="1">
    <source>
        <dbReference type="HAMAP-Rule" id="MF_00644"/>
    </source>
</evidence>
<accession>P69695</accession>
<accession>P08890</accession>
<accession>Q40003</accession>
<sequence>MTIAFQLAVFALIATSSVLVISVPLVFASPDGWSNNKNVVFSGTSLWIGLVFLVAILNSLIS</sequence>